<proteinExistence type="inferred from homology"/>
<gene>
    <name type="primary">SRB7</name>
    <name type="synonym">MED21</name>
    <name type="ordered locus">CAGL0J11022g</name>
</gene>
<organism>
    <name type="scientific">Candida glabrata (strain ATCC 2001 / BCRC 20586 / JCM 3761 / NBRC 0622 / NRRL Y-65 / CBS 138)</name>
    <name type="common">Yeast</name>
    <name type="synonym">Nakaseomyces glabratus</name>
    <dbReference type="NCBI Taxonomy" id="284593"/>
    <lineage>
        <taxon>Eukaryota</taxon>
        <taxon>Fungi</taxon>
        <taxon>Dikarya</taxon>
        <taxon>Ascomycota</taxon>
        <taxon>Saccharomycotina</taxon>
        <taxon>Saccharomycetes</taxon>
        <taxon>Saccharomycetales</taxon>
        <taxon>Saccharomycetaceae</taxon>
        <taxon>Nakaseomyces</taxon>
    </lineage>
</organism>
<reference key="1">
    <citation type="journal article" date="2004" name="Nature">
        <title>Genome evolution in yeasts.</title>
        <authorList>
            <person name="Dujon B."/>
            <person name="Sherman D."/>
            <person name="Fischer G."/>
            <person name="Durrens P."/>
            <person name="Casaregola S."/>
            <person name="Lafontaine I."/>
            <person name="de Montigny J."/>
            <person name="Marck C."/>
            <person name="Neuveglise C."/>
            <person name="Talla E."/>
            <person name="Goffard N."/>
            <person name="Frangeul L."/>
            <person name="Aigle M."/>
            <person name="Anthouard V."/>
            <person name="Babour A."/>
            <person name="Barbe V."/>
            <person name="Barnay S."/>
            <person name="Blanchin S."/>
            <person name="Beckerich J.-M."/>
            <person name="Beyne E."/>
            <person name="Bleykasten C."/>
            <person name="Boisrame A."/>
            <person name="Boyer J."/>
            <person name="Cattolico L."/>
            <person name="Confanioleri F."/>
            <person name="de Daruvar A."/>
            <person name="Despons L."/>
            <person name="Fabre E."/>
            <person name="Fairhead C."/>
            <person name="Ferry-Dumazet H."/>
            <person name="Groppi A."/>
            <person name="Hantraye F."/>
            <person name="Hennequin C."/>
            <person name="Jauniaux N."/>
            <person name="Joyet P."/>
            <person name="Kachouri R."/>
            <person name="Kerrest A."/>
            <person name="Koszul R."/>
            <person name="Lemaire M."/>
            <person name="Lesur I."/>
            <person name="Ma L."/>
            <person name="Muller H."/>
            <person name="Nicaud J.-M."/>
            <person name="Nikolski M."/>
            <person name="Oztas S."/>
            <person name="Ozier-Kalogeropoulos O."/>
            <person name="Pellenz S."/>
            <person name="Potier S."/>
            <person name="Richard G.-F."/>
            <person name="Straub M.-L."/>
            <person name="Suleau A."/>
            <person name="Swennen D."/>
            <person name="Tekaia F."/>
            <person name="Wesolowski-Louvel M."/>
            <person name="Westhof E."/>
            <person name="Wirth B."/>
            <person name="Zeniou-Meyer M."/>
            <person name="Zivanovic Y."/>
            <person name="Bolotin-Fukuhara M."/>
            <person name="Thierry A."/>
            <person name="Bouchier C."/>
            <person name="Caudron B."/>
            <person name="Scarpelli C."/>
            <person name="Gaillardin C."/>
            <person name="Weissenbach J."/>
            <person name="Wincker P."/>
            <person name="Souciet J.-L."/>
        </authorList>
    </citation>
    <scope>NUCLEOTIDE SEQUENCE [LARGE SCALE GENOMIC DNA]</scope>
    <source>
        <strain>ATCC 2001 / BCRC 20586 / JCM 3761 / NBRC 0622 / NRRL Y-65 / CBS 138</strain>
    </source>
</reference>
<sequence>MTDRLTQLQRCLDQVMEQFCATLNFIDKRHDFEPFNDKEPKMTDKHASVATPEEFSNGIDELSTDIIVKIRQITTLIDSLPGVGVSAEEQLHKIDSLQKKLVDIEDEKIHAIKKKDDLLKQVDDLITVFVGGIADSRRGTSLAPENVQEDNDIKQEAEVPTSSEAIEQKIANEKIESKIEGEYNDNINEDSDSKSADSELFMDKDDADNISESISPGKI</sequence>
<protein>
    <recommendedName>
        <fullName>Mediator of RNA polymerase II transcription subunit 21</fullName>
    </recommendedName>
    <alternativeName>
        <fullName>Mediator complex subunit 21</fullName>
    </alternativeName>
</protein>
<accession>Q6FNK3</accession>
<feature type="chain" id="PRO_0000305961" description="Mediator of RNA polymerase II transcription subunit 21">
    <location>
        <begin position="1"/>
        <end position="219"/>
    </location>
</feature>
<feature type="region of interest" description="Disordered" evidence="3">
    <location>
        <begin position="141"/>
        <end position="219"/>
    </location>
</feature>
<feature type="coiled-coil region" evidence="2">
    <location>
        <begin position="86"/>
        <end position="125"/>
    </location>
</feature>
<feature type="compositionally biased region" description="Basic and acidic residues" evidence="3">
    <location>
        <begin position="166"/>
        <end position="181"/>
    </location>
</feature>
<feature type="compositionally biased region" description="Basic and acidic residues" evidence="3">
    <location>
        <begin position="191"/>
        <end position="204"/>
    </location>
</feature>
<feature type="compositionally biased region" description="Polar residues" evidence="3">
    <location>
        <begin position="210"/>
        <end position="219"/>
    </location>
</feature>
<keyword id="KW-0010">Activator</keyword>
<keyword id="KW-0175">Coiled coil</keyword>
<keyword id="KW-0539">Nucleus</keyword>
<keyword id="KW-1185">Reference proteome</keyword>
<keyword id="KW-0804">Transcription</keyword>
<keyword id="KW-0805">Transcription regulation</keyword>
<name>MED21_CANGA</name>
<comment type="function">
    <text evidence="1">Component of the Mediator complex, a coactivator involved in the regulated transcription of nearly all RNA polymerase II-dependent genes. Mediator functions as a bridge to convey information from gene-specific regulatory proteins to the basal RNA polymerase II transcription machinery. Mediator is recruited to promoters by direct interactions with regulatory proteins and serves as a scaffold for the assembly of a functional preinitiation complex with RNA polymerase II and the general transcription factors (By similarity).</text>
</comment>
<comment type="subunit">
    <text evidence="1">Component of the Mediator complex.</text>
</comment>
<comment type="subcellular location">
    <subcellularLocation>
        <location evidence="1">Nucleus</location>
    </subcellularLocation>
</comment>
<comment type="similarity">
    <text evidence="4">Belongs to the Mediator complex subunit 21 family.</text>
</comment>
<dbReference type="EMBL" id="CR380956">
    <property type="protein sequence ID" value="CAG61142.1"/>
    <property type="molecule type" value="Genomic_DNA"/>
</dbReference>
<dbReference type="RefSeq" id="XP_448191.1">
    <property type="nucleotide sequence ID" value="XM_448191.1"/>
</dbReference>
<dbReference type="SMR" id="Q6FNK3"/>
<dbReference type="FunCoup" id="Q6FNK3">
    <property type="interactions" value="321"/>
</dbReference>
<dbReference type="STRING" id="284593.Q6FNK3"/>
<dbReference type="EnsemblFungi" id="CAGL0J11022g-T">
    <property type="protein sequence ID" value="CAGL0J11022g-T-p1"/>
    <property type="gene ID" value="CAGL0J11022g"/>
</dbReference>
<dbReference type="KEGG" id="cgr:2889520"/>
<dbReference type="CGD" id="CAL0133054">
    <property type="gene designation" value="CAGL0J11022g"/>
</dbReference>
<dbReference type="VEuPathDB" id="FungiDB:CAGL0J11022g"/>
<dbReference type="eggNOG" id="KOG1510">
    <property type="taxonomic scope" value="Eukaryota"/>
</dbReference>
<dbReference type="HOGENOM" id="CLU_1261337_0_0_1"/>
<dbReference type="InParanoid" id="Q6FNK3"/>
<dbReference type="OMA" id="LTTYHDH"/>
<dbReference type="Proteomes" id="UP000002428">
    <property type="component" value="Chromosome J"/>
</dbReference>
<dbReference type="GO" id="GO:0016592">
    <property type="term" value="C:mediator complex"/>
    <property type="evidence" value="ECO:0007669"/>
    <property type="project" value="InterPro"/>
</dbReference>
<dbReference type="GO" id="GO:0003712">
    <property type="term" value="F:transcription coregulator activity"/>
    <property type="evidence" value="ECO:0007669"/>
    <property type="project" value="TreeGrafter"/>
</dbReference>
<dbReference type="GO" id="GO:0006357">
    <property type="term" value="P:regulation of transcription by RNA polymerase II"/>
    <property type="evidence" value="ECO:0007669"/>
    <property type="project" value="TreeGrafter"/>
</dbReference>
<dbReference type="Gene3D" id="6.10.280.10">
    <property type="entry name" value="Mediator complex, subunit Med21"/>
    <property type="match status" value="1"/>
</dbReference>
<dbReference type="InterPro" id="IPR037212">
    <property type="entry name" value="Med7/Med21-like"/>
</dbReference>
<dbReference type="InterPro" id="IPR021384">
    <property type="entry name" value="Mediator_Med21"/>
</dbReference>
<dbReference type="PANTHER" id="PTHR13381:SF0">
    <property type="entry name" value="MEDIATOR OF RNA POLYMERASE II TRANSCRIPTION SUBUNIT 21"/>
    <property type="match status" value="1"/>
</dbReference>
<dbReference type="PANTHER" id="PTHR13381">
    <property type="entry name" value="RNA POLYMERASE II HOLOENZYME COMPONENT SRB7"/>
    <property type="match status" value="1"/>
</dbReference>
<dbReference type="Pfam" id="PF11221">
    <property type="entry name" value="Med21"/>
    <property type="match status" value="1"/>
</dbReference>
<dbReference type="SUPFAM" id="SSF140718">
    <property type="entry name" value="Mediator hinge subcomplex-like"/>
    <property type="match status" value="1"/>
</dbReference>
<evidence type="ECO:0000250" key="1"/>
<evidence type="ECO:0000255" key="2"/>
<evidence type="ECO:0000256" key="3">
    <source>
        <dbReference type="SAM" id="MobiDB-lite"/>
    </source>
</evidence>
<evidence type="ECO:0000305" key="4"/>